<comment type="function">
    <text>Surface antigen mediating adhesion and aggregation in S.cerevisiae.</text>
</comment>
<reference key="1">
    <citation type="submission" date="1996-01" db="EMBL/GenBank/DDBJ databases">
        <authorList>
            <person name="Jiang W."/>
            <person name="Finkler A."/>
            <person name="Koltin Y."/>
        </authorList>
    </citation>
    <scope>NUCLEOTIDE SEQUENCE [GENOMIC DNA]</scope>
</reference>
<reference key="2">
    <citation type="journal article" date="2004" name="Proc. Natl. Acad. Sci. U.S.A.">
        <title>The diploid genome sequence of Candida albicans.</title>
        <authorList>
            <person name="Jones T."/>
            <person name="Federspiel N.A."/>
            <person name="Chibana H."/>
            <person name="Dungan J."/>
            <person name="Kalman S."/>
            <person name="Magee B.B."/>
            <person name="Newport G."/>
            <person name="Thorstenson Y.R."/>
            <person name="Agabian N."/>
            <person name="Magee P.T."/>
            <person name="Davis R.W."/>
            <person name="Scherer S."/>
        </authorList>
    </citation>
    <scope>NUCLEOTIDE SEQUENCE [LARGE SCALE GENOMIC DNA]</scope>
    <source>
        <strain>SC5314 / ATCC MYA-2876</strain>
    </source>
</reference>
<reference key="3">
    <citation type="journal article" date="2007" name="Genome Biol.">
        <title>Assembly of the Candida albicans genome into sixteen supercontigs aligned on the eight chromosomes.</title>
        <authorList>
            <person name="van het Hoog M."/>
            <person name="Rast T.J."/>
            <person name="Martchenko M."/>
            <person name="Grindle S."/>
            <person name="Dignard D."/>
            <person name="Hogues H."/>
            <person name="Cuomo C."/>
            <person name="Berriman M."/>
            <person name="Scherer S."/>
            <person name="Magee B.B."/>
            <person name="Whiteway M."/>
            <person name="Chibana H."/>
            <person name="Nantel A."/>
            <person name="Magee P.T."/>
        </authorList>
    </citation>
    <scope>GENOME REANNOTATION</scope>
    <source>
        <strain>SC5314 / ATCC MYA-2876</strain>
    </source>
</reference>
<reference key="4">
    <citation type="journal article" date="2013" name="Genome Biol.">
        <title>Assembly of a phased diploid Candida albicans genome facilitates allele-specific measurements and provides a simple model for repeat and indel structure.</title>
        <authorList>
            <person name="Muzzey D."/>
            <person name="Schwartz K."/>
            <person name="Weissman J.S."/>
            <person name="Sherlock G."/>
        </authorList>
    </citation>
    <scope>NUCLEOTIDE SEQUENCE [LARGE SCALE GENOMIC DNA]</scope>
    <scope>GENOME REANNOTATION</scope>
    <source>
        <strain>SC5314 / ATCC MYA-2876</strain>
    </source>
</reference>
<reference key="5">
    <citation type="submission" date="1994-12" db="EMBL/GenBank/DDBJ databases">
        <authorList>
            <person name="Edwards J.E."/>
        </authorList>
    </citation>
    <scope>NUCLEOTIDE SEQUENCE [GENOMIC DNA] OF 35-612</scope>
    <source>
        <strain>ATCC 36082</strain>
    </source>
</reference>
<evidence type="ECO:0000256" key="1">
    <source>
        <dbReference type="SAM" id="MobiDB-lite"/>
    </source>
</evidence>
<evidence type="ECO:0000305" key="2"/>
<name>ADF1_CANAL</name>
<dbReference type="EMBL" id="U44747">
    <property type="protein sequence ID" value="AAA86758.1"/>
    <property type="molecule type" value="Genomic_DNA"/>
</dbReference>
<dbReference type="EMBL" id="CP017625">
    <property type="protein sequence ID" value="AOW28653.1"/>
    <property type="molecule type" value="Genomic_DNA"/>
</dbReference>
<dbReference type="EMBL" id="U18983">
    <property type="protein sequence ID" value="AAA62506.1"/>
    <property type="molecule type" value="Genomic_DNA"/>
</dbReference>
<dbReference type="RefSeq" id="XP_716097.1">
    <property type="nucleotide sequence ID" value="XM_711004.1"/>
</dbReference>
<dbReference type="SMR" id="P46589"/>
<dbReference type="STRING" id="237561.P46589"/>
<dbReference type="EnsemblFungi" id="C3_06470W_A-T">
    <property type="protein sequence ID" value="C3_06470W_A-T-p1"/>
    <property type="gene ID" value="C3_06470W_A"/>
</dbReference>
<dbReference type="GeneID" id="3642284"/>
<dbReference type="KEGG" id="cal:CAALFM_C306470WA"/>
<dbReference type="CGD" id="CAL0000196141">
    <property type="gene designation" value="AAF1"/>
</dbReference>
<dbReference type="VEuPathDB" id="FungiDB:C3_06470W_A"/>
<dbReference type="eggNOG" id="ENOG502S8GZ">
    <property type="taxonomic scope" value="Eukaryota"/>
</dbReference>
<dbReference type="HOGENOM" id="CLU_527843_0_0_1"/>
<dbReference type="InParanoid" id="P46589"/>
<dbReference type="OMA" id="RQFQTPN"/>
<dbReference type="OrthoDB" id="2350934at2759"/>
<dbReference type="Proteomes" id="UP000000559">
    <property type="component" value="Chromosome 3"/>
</dbReference>
<dbReference type="GO" id="GO:0044406">
    <property type="term" value="P:adhesion of symbiont to host"/>
    <property type="evidence" value="ECO:0000316"/>
    <property type="project" value="CGD"/>
</dbReference>
<dbReference type="GO" id="GO:0007155">
    <property type="term" value="P:cell adhesion"/>
    <property type="evidence" value="ECO:0000316"/>
    <property type="project" value="CGD"/>
</dbReference>
<dbReference type="GO" id="GO:0098609">
    <property type="term" value="P:cell-cell adhesion"/>
    <property type="evidence" value="ECO:0000314"/>
    <property type="project" value="CGD"/>
</dbReference>
<dbReference type="GO" id="GO:0030447">
    <property type="term" value="P:filamentous growth"/>
    <property type="evidence" value="ECO:0000315"/>
    <property type="project" value="CGD"/>
</dbReference>
<dbReference type="GO" id="GO:0006355">
    <property type="term" value="P:regulation of DNA-templated transcription"/>
    <property type="evidence" value="ECO:0000316"/>
    <property type="project" value="CGD"/>
</dbReference>
<sequence length="612" mass="68794">MSSFNSNSNPANAQNLSSFQFQPPKEDVIFDTHQMSLSVPQSRYYASSMMQQSQQGQPQSQTSQQQQQQPFLMNIPPAFTQTQPQQMLYAMPPLQTQQPSSSSATTNNVVPPHHYNQQQSQQQQQQQQQYQQMQPQPNNMQFFDNTIPNYLIMNQTISPSQTQTTAQPNISYYNYSTQPQLQSAQPISHSQPQPQPQATQPRSNRSRSQTSFSKPRGSRQVSGSGRSTGAKKQSAITSGSTGTGPARNADTGMTSVANSTSTTTMTTTNNNNKLSVSAPVNVIYANLPERLQQVLPAPPLSRAPVRPDVTVNLTSKRAKRKSKFTPEQDDMIVNLKKKGKSWVEIAEITGVGSYLAARNRFQVIVGQQGNNNSSAWDNTDKLFLNQLLDAGEIEKWRFICCELNKSTNKNFTDYECREMIRQLFWLNPASFGVNEETIIESQKEKKLTEKTIEQREQQRKKRASANHSPPDSDSITNTNNNQQEVKYIDPQYKNYQSQLMPNQNTGSGATKISSTTPPPPSQALSNNVNTMNKNIVSSALGGTSFSQEQHSLHSNQHHHNHQQHPLIHHHQYQQQSSLPPPPTIPSTIPTSSLSIQQQQQQQQQQLYNKQFY</sequence>
<accession>P46589</accession>
<accession>A0A1D8PKL9</accession>
<accession>Q5A2X5</accession>
<protein>
    <recommendedName>
        <fullName>Adherence factor</fullName>
    </recommendedName>
    <alternativeName>
        <fullName>Adhesion and aggregation mediating surface antigen</fullName>
    </alternativeName>
</protein>
<gene>
    <name type="primary">ADF1</name>
    <name type="synonym">AAF1</name>
    <name type="ordered locus">CAALFM_C306470WA</name>
    <name type="ORF">CaO19.7436</name>
</gene>
<organism>
    <name type="scientific">Candida albicans (strain SC5314 / ATCC MYA-2876)</name>
    <name type="common">Yeast</name>
    <dbReference type="NCBI Taxonomy" id="237561"/>
    <lineage>
        <taxon>Eukaryota</taxon>
        <taxon>Fungi</taxon>
        <taxon>Dikarya</taxon>
        <taxon>Ascomycota</taxon>
        <taxon>Saccharomycotina</taxon>
        <taxon>Pichiomycetes</taxon>
        <taxon>Debaryomycetaceae</taxon>
        <taxon>Candida/Lodderomyces clade</taxon>
        <taxon>Candida</taxon>
    </lineage>
</organism>
<keyword id="KW-0130">Cell adhesion</keyword>
<keyword id="KW-1185">Reference proteome</keyword>
<feature type="chain" id="PRO_0000064451" description="Adherence factor">
    <location>
        <begin position="1"/>
        <end position="612"/>
    </location>
</feature>
<feature type="region of interest" description="Disordered" evidence="1">
    <location>
        <begin position="1"/>
        <end position="20"/>
    </location>
</feature>
<feature type="region of interest" description="Disordered" evidence="1">
    <location>
        <begin position="46"/>
        <end position="68"/>
    </location>
</feature>
<feature type="region of interest" description="Disordered" evidence="1">
    <location>
        <begin position="94"/>
        <end position="143"/>
    </location>
</feature>
<feature type="region of interest" description="Disordered" evidence="1">
    <location>
        <begin position="179"/>
        <end position="273"/>
    </location>
</feature>
<feature type="region of interest" description="Disordered" evidence="1">
    <location>
        <begin position="443"/>
        <end position="480"/>
    </location>
</feature>
<feature type="region of interest" description="Disordered" evidence="1">
    <location>
        <begin position="497"/>
        <end position="527"/>
    </location>
</feature>
<feature type="region of interest" description="Disordered" evidence="1">
    <location>
        <begin position="546"/>
        <end position="612"/>
    </location>
</feature>
<feature type="compositionally biased region" description="Low complexity" evidence="1">
    <location>
        <begin position="1"/>
        <end position="18"/>
    </location>
</feature>
<feature type="compositionally biased region" description="Low complexity" evidence="1">
    <location>
        <begin position="47"/>
        <end position="68"/>
    </location>
</feature>
<feature type="compositionally biased region" description="Low complexity" evidence="1">
    <location>
        <begin position="94"/>
        <end position="106"/>
    </location>
</feature>
<feature type="compositionally biased region" description="Low complexity" evidence="1">
    <location>
        <begin position="115"/>
        <end position="141"/>
    </location>
</feature>
<feature type="compositionally biased region" description="Low complexity" evidence="1">
    <location>
        <begin position="182"/>
        <end position="203"/>
    </location>
</feature>
<feature type="compositionally biased region" description="Low complexity" evidence="1">
    <location>
        <begin position="218"/>
        <end position="228"/>
    </location>
</feature>
<feature type="compositionally biased region" description="Polar residues" evidence="1">
    <location>
        <begin position="230"/>
        <end position="240"/>
    </location>
</feature>
<feature type="compositionally biased region" description="Low complexity" evidence="1">
    <location>
        <begin position="254"/>
        <end position="272"/>
    </location>
</feature>
<feature type="compositionally biased region" description="Basic and acidic residues" evidence="1">
    <location>
        <begin position="443"/>
        <end position="457"/>
    </location>
</feature>
<feature type="compositionally biased region" description="Polar residues" evidence="1">
    <location>
        <begin position="465"/>
        <end position="480"/>
    </location>
</feature>
<feature type="compositionally biased region" description="Polar residues" evidence="1">
    <location>
        <begin position="497"/>
        <end position="512"/>
    </location>
</feature>
<feature type="compositionally biased region" description="Basic residues" evidence="1">
    <location>
        <begin position="555"/>
        <end position="571"/>
    </location>
</feature>
<feature type="compositionally biased region" description="Low complexity" evidence="1">
    <location>
        <begin position="585"/>
        <end position="606"/>
    </location>
</feature>
<feature type="sequence conflict" description="In Ref. 5; AAA62506." evidence="2" ref="5">
    <original>F</original>
    <variation>N</variation>
    <location>
        <position position="142"/>
    </location>
</feature>
<feature type="sequence conflict" description="In Ref. 5; AAA62506." evidence="2" ref="5">
    <original>T</original>
    <variation>I</variation>
    <location>
        <position position="451"/>
    </location>
</feature>
<proteinExistence type="predicted"/>